<reference key="1">
    <citation type="submission" date="2007-11" db="EMBL/GenBank/DDBJ databases">
        <authorList>
            <consortium name="The Salmonella enterica serovar Arizonae Genome Sequencing Project"/>
            <person name="McClelland M."/>
            <person name="Sanderson E.K."/>
            <person name="Porwollik S."/>
            <person name="Spieth J."/>
            <person name="Clifton W.S."/>
            <person name="Fulton R."/>
            <person name="Chunyan W."/>
            <person name="Wollam A."/>
            <person name="Shah N."/>
            <person name="Pepin K."/>
            <person name="Bhonagiri V."/>
            <person name="Nash W."/>
            <person name="Johnson M."/>
            <person name="Thiruvilangam P."/>
            <person name="Wilson R."/>
        </authorList>
    </citation>
    <scope>NUCLEOTIDE SEQUENCE [LARGE SCALE GENOMIC DNA]</scope>
    <source>
        <strain>ATCC BAA-731 / CDC346-86 / RSK2980</strain>
    </source>
</reference>
<gene>
    <name evidence="1" type="primary">apt</name>
    <name type="ordered locus">SARI_02450</name>
</gene>
<keyword id="KW-0963">Cytoplasm</keyword>
<keyword id="KW-0328">Glycosyltransferase</keyword>
<keyword id="KW-0660">Purine salvage</keyword>
<keyword id="KW-1185">Reference proteome</keyword>
<keyword id="KW-0808">Transferase</keyword>
<sequence>MTATAQQLEFLKNSIKSIQDYPKPGILFRDVTSLLEDPKAYTLSIELLVERYKKAGITKVVGTEARGFLFGAPVALGLGVGFVPVRKPRKLPRETIAETYELEYGTDQLEIHVDAIKPGDNVLVVDDLLATGGTIEATVKLIRRLGGKVTDAAFIINLFDLGGEQRLEKQGITCYSLVPFPGH</sequence>
<dbReference type="EC" id="2.4.2.7" evidence="1"/>
<dbReference type="EMBL" id="CP000880">
    <property type="protein sequence ID" value="ABX22311.1"/>
    <property type="molecule type" value="Genomic_DNA"/>
</dbReference>
<dbReference type="SMR" id="A9MLY9"/>
<dbReference type="STRING" id="41514.SARI_02450"/>
<dbReference type="KEGG" id="ses:SARI_02450"/>
<dbReference type="HOGENOM" id="CLU_063339_3_0_6"/>
<dbReference type="UniPathway" id="UPA00588">
    <property type="reaction ID" value="UER00646"/>
</dbReference>
<dbReference type="Proteomes" id="UP000002084">
    <property type="component" value="Chromosome"/>
</dbReference>
<dbReference type="GO" id="GO:0005829">
    <property type="term" value="C:cytosol"/>
    <property type="evidence" value="ECO:0007669"/>
    <property type="project" value="TreeGrafter"/>
</dbReference>
<dbReference type="GO" id="GO:0003999">
    <property type="term" value="F:adenine phosphoribosyltransferase activity"/>
    <property type="evidence" value="ECO:0007669"/>
    <property type="project" value="UniProtKB-UniRule"/>
</dbReference>
<dbReference type="GO" id="GO:0006168">
    <property type="term" value="P:adenine salvage"/>
    <property type="evidence" value="ECO:0007669"/>
    <property type="project" value="InterPro"/>
</dbReference>
<dbReference type="GO" id="GO:0044209">
    <property type="term" value="P:AMP salvage"/>
    <property type="evidence" value="ECO:0007669"/>
    <property type="project" value="UniProtKB-UniRule"/>
</dbReference>
<dbReference type="GO" id="GO:0006166">
    <property type="term" value="P:purine ribonucleoside salvage"/>
    <property type="evidence" value="ECO:0007669"/>
    <property type="project" value="UniProtKB-KW"/>
</dbReference>
<dbReference type="CDD" id="cd06223">
    <property type="entry name" value="PRTases_typeI"/>
    <property type="match status" value="1"/>
</dbReference>
<dbReference type="FunFam" id="3.40.50.2020:FF:000004">
    <property type="entry name" value="Adenine phosphoribosyltransferase"/>
    <property type="match status" value="1"/>
</dbReference>
<dbReference type="Gene3D" id="3.40.50.2020">
    <property type="match status" value="1"/>
</dbReference>
<dbReference type="HAMAP" id="MF_00004">
    <property type="entry name" value="Aden_phosphoribosyltr"/>
    <property type="match status" value="1"/>
</dbReference>
<dbReference type="InterPro" id="IPR005764">
    <property type="entry name" value="Ade_phspho_trans"/>
</dbReference>
<dbReference type="InterPro" id="IPR050120">
    <property type="entry name" value="Adenine_PRTase"/>
</dbReference>
<dbReference type="InterPro" id="IPR000836">
    <property type="entry name" value="PRibTrfase_dom"/>
</dbReference>
<dbReference type="InterPro" id="IPR029057">
    <property type="entry name" value="PRTase-like"/>
</dbReference>
<dbReference type="NCBIfam" id="TIGR01090">
    <property type="entry name" value="apt"/>
    <property type="match status" value="1"/>
</dbReference>
<dbReference type="NCBIfam" id="NF002632">
    <property type="entry name" value="PRK02304.1-1"/>
    <property type="match status" value="1"/>
</dbReference>
<dbReference type="NCBIfam" id="NF002634">
    <property type="entry name" value="PRK02304.1-3"/>
    <property type="match status" value="1"/>
</dbReference>
<dbReference type="NCBIfam" id="NF002636">
    <property type="entry name" value="PRK02304.1-5"/>
    <property type="match status" value="1"/>
</dbReference>
<dbReference type="PANTHER" id="PTHR11776">
    <property type="entry name" value="ADENINE PHOSPHORIBOSYLTRANSFERASE"/>
    <property type="match status" value="1"/>
</dbReference>
<dbReference type="PANTHER" id="PTHR11776:SF7">
    <property type="entry name" value="PHOSPHORIBOSYLTRANSFERASE DOMAIN-CONTAINING PROTEIN"/>
    <property type="match status" value="1"/>
</dbReference>
<dbReference type="Pfam" id="PF00156">
    <property type="entry name" value="Pribosyltran"/>
    <property type="match status" value="1"/>
</dbReference>
<dbReference type="SUPFAM" id="SSF53271">
    <property type="entry name" value="PRTase-like"/>
    <property type="match status" value="1"/>
</dbReference>
<dbReference type="PROSITE" id="PS00103">
    <property type="entry name" value="PUR_PYR_PR_TRANSFER"/>
    <property type="match status" value="1"/>
</dbReference>
<name>APT_SALAR</name>
<feature type="chain" id="PRO_1000073801" description="Adenine phosphoribosyltransferase">
    <location>
        <begin position="1"/>
        <end position="183"/>
    </location>
</feature>
<organism>
    <name type="scientific">Salmonella arizonae (strain ATCC BAA-731 / CDC346-86 / RSK2980)</name>
    <dbReference type="NCBI Taxonomy" id="41514"/>
    <lineage>
        <taxon>Bacteria</taxon>
        <taxon>Pseudomonadati</taxon>
        <taxon>Pseudomonadota</taxon>
        <taxon>Gammaproteobacteria</taxon>
        <taxon>Enterobacterales</taxon>
        <taxon>Enterobacteriaceae</taxon>
        <taxon>Salmonella</taxon>
    </lineage>
</organism>
<comment type="function">
    <text evidence="1">Catalyzes a salvage reaction resulting in the formation of AMP, that is energically less costly than de novo synthesis.</text>
</comment>
<comment type="catalytic activity">
    <reaction evidence="1">
        <text>AMP + diphosphate = 5-phospho-alpha-D-ribose 1-diphosphate + adenine</text>
        <dbReference type="Rhea" id="RHEA:16609"/>
        <dbReference type="ChEBI" id="CHEBI:16708"/>
        <dbReference type="ChEBI" id="CHEBI:33019"/>
        <dbReference type="ChEBI" id="CHEBI:58017"/>
        <dbReference type="ChEBI" id="CHEBI:456215"/>
        <dbReference type="EC" id="2.4.2.7"/>
    </reaction>
</comment>
<comment type="pathway">
    <text evidence="1">Purine metabolism; AMP biosynthesis via salvage pathway; AMP from adenine: step 1/1.</text>
</comment>
<comment type="subunit">
    <text evidence="1">Homodimer.</text>
</comment>
<comment type="subcellular location">
    <subcellularLocation>
        <location evidence="1">Cytoplasm</location>
    </subcellularLocation>
</comment>
<comment type="similarity">
    <text evidence="1">Belongs to the purine/pyrimidine phosphoribosyltransferase family.</text>
</comment>
<evidence type="ECO:0000255" key="1">
    <source>
        <dbReference type="HAMAP-Rule" id="MF_00004"/>
    </source>
</evidence>
<protein>
    <recommendedName>
        <fullName evidence="1">Adenine phosphoribosyltransferase</fullName>
        <shortName evidence="1">APRT</shortName>
        <ecNumber evidence="1">2.4.2.7</ecNumber>
    </recommendedName>
</protein>
<proteinExistence type="inferred from homology"/>
<accession>A9MLY9</accession>